<feature type="signal peptide" evidence="1">
    <location>
        <begin position="1"/>
        <end position="27"/>
    </location>
</feature>
<feature type="chain" id="PRO_0000353995" description="Membrane-bound lytic murein transglycosylase F">
    <location>
        <begin position="28"/>
        <end position="529"/>
    </location>
</feature>
<feature type="region of interest" description="Non-LT domain" evidence="1">
    <location>
        <begin position="28"/>
        <end position="287"/>
    </location>
</feature>
<feature type="region of interest" description="LT domain" evidence="1">
    <location>
        <begin position="288"/>
        <end position="529"/>
    </location>
</feature>
<feature type="region of interest" description="Disordered" evidence="2">
    <location>
        <begin position="510"/>
        <end position="529"/>
    </location>
</feature>
<feature type="compositionally biased region" description="Polar residues" evidence="2">
    <location>
        <begin position="519"/>
        <end position="529"/>
    </location>
</feature>
<feature type="active site" evidence="1">
    <location>
        <position position="332"/>
    </location>
</feature>
<gene>
    <name evidence="1" type="primary">mltF</name>
    <name type="ordered locus">VV0846</name>
</gene>
<proteinExistence type="inferred from homology"/>
<accession>Q7MN72</accession>
<name>MLTF_VIBVY</name>
<sequence>MPIFNLHQLRNFLFIIATTLFLSACQIESKPTSELDQIKQRGVLRVGTLNNQLSYYIGPDGQTGLDYELARQFADELGVKLEVKVAFRQAELFPMLKRGDIDLIATGLNQTPRAIKQFRPGPSYYYVSQVVVYKNGALRPRNLKQLVEYQNAKTASEDEAEASNNAAANTLQVVKQSQNVTLLKSLQSDYPELQFTTVSDADNYDLLRRVSTGELRFAISDSIELSLAQRLYPDLATAFEVTEDQPVSWFVRRSPDESLYALMIEFFGNISQSGELARLEEKYIGHIGSFDYVDTRAFIRALDNKLPKWAPLFEQYSAEFDWRLIAALAYQESHWNPLAKSPTGVRGMMMLTLPTAQSVGVKNRLDPEQSIRGGVEYLRRIVARVPESIPQHEKIWFALASYNVGFGHMMDARRLTKRQGGDPDSWGDVKERLPLLRQKKYFSQTRYGYARGDEAKNYVENIRRYYQSIIGHVGQNSLIASDQEGEIQVIPPLENSELVAASDIDAAENEALSPDVGVSQATLTTEVQP</sequence>
<comment type="function">
    <text evidence="1">Murein-degrading enzyme that degrades murein glycan strands and insoluble, high-molecular weight murein sacculi, with the concomitant formation of a 1,6-anhydromuramoyl product. Lytic transglycosylases (LTs) play an integral role in the metabolism of the peptidoglycan (PG) sacculus. Their lytic action creates space within the PG sacculus to allow for its expansion as well as for the insertion of various structures such as secretion systems and flagella.</text>
</comment>
<comment type="catalytic activity">
    <reaction evidence="1">
        <text>Exolytic cleavage of the (1-&gt;4)-beta-glycosidic linkage between N-acetylmuramic acid (MurNAc) and N-acetylglucosamine (GlcNAc) residues in peptidoglycan, from either the reducing or the non-reducing ends of the peptidoglycan chains, with concomitant formation of a 1,6-anhydrobond in the MurNAc residue.</text>
        <dbReference type="EC" id="4.2.2.n1"/>
    </reaction>
</comment>
<comment type="subcellular location">
    <subcellularLocation>
        <location>Cell outer membrane</location>
        <topology>Peripheral membrane protein</topology>
    </subcellularLocation>
    <text evidence="1">Attached to the inner leaflet of the outer membrane.</text>
</comment>
<comment type="domain">
    <text evidence="1">The N-terminal domain does not have lytic activity and probably modulates enzymatic activity. The C-terminal domain is the catalytic active domain.</text>
</comment>
<comment type="similarity">
    <text evidence="1">In the N-terminal section; belongs to the bacterial solute-binding protein 3 family.</text>
</comment>
<comment type="similarity">
    <text evidence="1">In the C-terminal section; belongs to the transglycosylase Slt family.</text>
</comment>
<comment type="sequence caution" evidence="3">
    <conflict type="erroneous initiation">
        <sequence resource="EMBL-CDS" id="BAC93609"/>
    </conflict>
</comment>
<reference key="1">
    <citation type="journal article" date="2003" name="Genome Res.">
        <title>Comparative genome analysis of Vibrio vulnificus, a marine pathogen.</title>
        <authorList>
            <person name="Chen C.-Y."/>
            <person name="Wu K.-M."/>
            <person name="Chang Y.-C."/>
            <person name="Chang C.-H."/>
            <person name="Tsai H.-C."/>
            <person name="Liao T.-L."/>
            <person name="Liu Y.-M."/>
            <person name="Chen H.-J."/>
            <person name="Shen A.B.-T."/>
            <person name="Li J.-C."/>
            <person name="Su T.-L."/>
            <person name="Shao C.-P."/>
            <person name="Lee C.-T."/>
            <person name="Hor L.-I."/>
            <person name="Tsai S.-F."/>
        </authorList>
    </citation>
    <scope>NUCLEOTIDE SEQUENCE [LARGE SCALE GENOMIC DNA]</scope>
    <source>
        <strain>YJ016</strain>
    </source>
</reference>
<dbReference type="EC" id="4.2.2.n1" evidence="1"/>
<dbReference type="EMBL" id="BA000037">
    <property type="protein sequence ID" value="BAC93609.1"/>
    <property type="status" value="ALT_INIT"/>
    <property type="molecule type" value="Genomic_DNA"/>
</dbReference>
<dbReference type="RefSeq" id="WP_011078441.1">
    <property type="nucleotide sequence ID" value="NC_005139.1"/>
</dbReference>
<dbReference type="SMR" id="Q7MN72"/>
<dbReference type="STRING" id="672.VV93_v1c07860"/>
<dbReference type="CAZy" id="GH23">
    <property type="family name" value="Glycoside Hydrolase Family 23"/>
</dbReference>
<dbReference type="KEGG" id="vvy:VV0846"/>
<dbReference type="PATRIC" id="fig|196600.6.peg.852"/>
<dbReference type="eggNOG" id="COG4623">
    <property type="taxonomic scope" value="Bacteria"/>
</dbReference>
<dbReference type="HOGENOM" id="CLU_027494_0_1_6"/>
<dbReference type="Proteomes" id="UP000002675">
    <property type="component" value="Chromosome I"/>
</dbReference>
<dbReference type="GO" id="GO:0009279">
    <property type="term" value="C:cell outer membrane"/>
    <property type="evidence" value="ECO:0007669"/>
    <property type="project" value="UniProtKB-SubCell"/>
</dbReference>
<dbReference type="GO" id="GO:0008933">
    <property type="term" value="F:peptidoglycan lytic transglycosylase activity"/>
    <property type="evidence" value="ECO:0007669"/>
    <property type="project" value="UniProtKB-UniRule"/>
</dbReference>
<dbReference type="GO" id="GO:0016998">
    <property type="term" value="P:cell wall macromolecule catabolic process"/>
    <property type="evidence" value="ECO:0007669"/>
    <property type="project" value="UniProtKB-UniRule"/>
</dbReference>
<dbReference type="GO" id="GO:0071555">
    <property type="term" value="P:cell wall organization"/>
    <property type="evidence" value="ECO:0007669"/>
    <property type="project" value="UniProtKB-KW"/>
</dbReference>
<dbReference type="GO" id="GO:0009253">
    <property type="term" value="P:peptidoglycan catabolic process"/>
    <property type="evidence" value="ECO:0007669"/>
    <property type="project" value="TreeGrafter"/>
</dbReference>
<dbReference type="CDD" id="cd13403">
    <property type="entry name" value="MLTF-like"/>
    <property type="match status" value="1"/>
</dbReference>
<dbReference type="CDD" id="cd01009">
    <property type="entry name" value="PBP2_YfhD_N"/>
    <property type="match status" value="1"/>
</dbReference>
<dbReference type="FunFam" id="1.10.530.10:FF:000003">
    <property type="entry name" value="Membrane-bound lytic murein transglycosylase F"/>
    <property type="match status" value="1"/>
</dbReference>
<dbReference type="Gene3D" id="1.10.530.10">
    <property type="match status" value="1"/>
</dbReference>
<dbReference type="Gene3D" id="3.40.190.10">
    <property type="entry name" value="Periplasmic binding protein-like II"/>
    <property type="match status" value="2"/>
</dbReference>
<dbReference type="HAMAP" id="MF_02016">
    <property type="entry name" value="MltF"/>
    <property type="match status" value="1"/>
</dbReference>
<dbReference type="InterPro" id="IPR023346">
    <property type="entry name" value="Lysozyme-like_dom_sf"/>
</dbReference>
<dbReference type="InterPro" id="IPR023703">
    <property type="entry name" value="MltF"/>
</dbReference>
<dbReference type="InterPro" id="IPR001638">
    <property type="entry name" value="Solute-binding_3/MltF_N"/>
</dbReference>
<dbReference type="InterPro" id="IPR000189">
    <property type="entry name" value="Transglyc_AS"/>
</dbReference>
<dbReference type="InterPro" id="IPR008258">
    <property type="entry name" value="Transglycosylase_SLT_dom_1"/>
</dbReference>
<dbReference type="NCBIfam" id="NF008112">
    <property type="entry name" value="PRK10859.1"/>
    <property type="match status" value="1"/>
</dbReference>
<dbReference type="PANTHER" id="PTHR35936">
    <property type="entry name" value="MEMBRANE-BOUND LYTIC MUREIN TRANSGLYCOSYLASE F"/>
    <property type="match status" value="1"/>
</dbReference>
<dbReference type="PANTHER" id="PTHR35936:SF32">
    <property type="entry name" value="MEMBRANE-BOUND LYTIC MUREIN TRANSGLYCOSYLASE F"/>
    <property type="match status" value="1"/>
</dbReference>
<dbReference type="Pfam" id="PF00497">
    <property type="entry name" value="SBP_bac_3"/>
    <property type="match status" value="1"/>
</dbReference>
<dbReference type="Pfam" id="PF01464">
    <property type="entry name" value="SLT"/>
    <property type="match status" value="1"/>
</dbReference>
<dbReference type="SMART" id="SM00062">
    <property type="entry name" value="PBPb"/>
    <property type="match status" value="1"/>
</dbReference>
<dbReference type="SUPFAM" id="SSF53955">
    <property type="entry name" value="Lysozyme-like"/>
    <property type="match status" value="1"/>
</dbReference>
<dbReference type="SUPFAM" id="SSF53850">
    <property type="entry name" value="Periplasmic binding protein-like II"/>
    <property type="match status" value="1"/>
</dbReference>
<dbReference type="PROSITE" id="PS00922">
    <property type="entry name" value="TRANSGLYCOSYLASE"/>
    <property type="match status" value="1"/>
</dbReference>
<keyword id="KW-0998">Cell outer membrane</keyword>
<keyword id="KW-0961">Cell wall biogenesis/degradation</keyword>
<keyword id="KW-0456">Lyase</keyword>
<keyword id="KW-0472">Membrane</keyword>
<keyword id="KW-0732">Signal</keyword>
<organism>
    <name type="scientific">Vibrio vulnificus (strain YJ016)</name>
    <dbReference type="NCBI Taxonomy" id="196600"/>
    <lineage>
        <taxon>Bacteria</taxon>
        <taxon>Pseudomonadati</taxon>
        <taxon>Pseudomonadota</taxon>
        <taxon>Gammaproteobacteria</taxon>
        <taxon>Vibrionales</taxon>
        <taxon>Vibrionaceae</taxon>
        <taxon>Vibrio</taxon>
    </lineage>
</organism>
<evidence type="ECO:0000255" key="1">
    <source>
        <dbReference type="HAMAP-Rule" id="MF_02016"/>
    </source>
</evidence>
<evidence type="ECO:0000256" key="2">
    <source>
        <dbReference type="SAM" id="MobiDB-lite"/>
    </source>
</evidence>
<evidence type="ECO:0000305" key="3"/>
<protein>
    <recommendedName>
        <fullName evidence="1">Membrane-bound lytic murein transglycosylase F</fullName>
        <ecNumber evidence="1">4.2.2.n1</ecNumber>
    </recommendedName>
    <alternativeName>
        <fullName evidence="1">Murein lyase F</fullName>
    </alternativeName>
</protein>